<proteinExistence type="inferred from homology"/>
<reference key="1">
    <citation type="journal article" date="2009" name="Infect. Immun.">
        <title>Comparative genomics reveal extensive transposon-mediated genomic plasticity and diversity among potential effector proteins within the genus Coxiella.</title>
        <authorList>
            <person name="Beare P.A."/>
            <person name="Unsworth N."/>
            <person name="Andoh M."/>
            <person name="Voth D.E."/>
            <person name="Omsland A."/>
            <person name="Gilk S.D."/>
            <person name="Williams K.P."/>
            <person name="Sobral B.W."/>
            <person name="Kupko J.J. III"/>
            <person name="Porcella S.F."/>
            <person name="Samuel J.E."/>
            <person name="Heinzen R.A."/>
        </authorList>
    </citation>
    <scope>NUCLEOTIDE SEQUENCE [LARGE SCALE GENOMIC DNA]</scope>
    <source>
        <strain>CbuG_Q212</strain>
    </source>
</reference>
<keyword id="KW-0067">ATP-binding</keyword>
<keyword id="KW-0963">Cytoplasm</keyword>
<keyword id="KW-1015">Disulfide bond</keyword>
<keyword id="KW-0547">Nucleotide-binding</keyword>
<keyword id="KW-0694">RNA-binding</keyword>
<keyword id="KW-0808">Transferase</keyword>
<keyword id="KW-0819">tRNA processing</keyword>
<keyword id="KW-0820">tRNA-binding</keyword>
<protein>
    <recommendedName>
        <fullName evidence="1">tRNA-specific 2-thiouridylase MnmA</fullName>
        <ecNumber evidence="1">2.8.1.13</ecNumber>
    </recommendedName>
</protein>
<accession>B6IZW5</accession>
<name>MNMA_COXB2</name>
<feature type="chain" id="PRO_1000203304" description="tRNA-specific 2-thiouridylase MnmA">
    <location>
        <begin position="1"/>
        <end position="371"/>
    </location>
</feature>
<feature type="region of interest" description="Interaction with target base in tRNA" evidence="1">
    <location>
        <begin position="108"/>
        <end position="110"/>
    </location>
</feature>
<feature type="region of interest" description="Interaction with tRNA" evidence="1">
    <location>
        <begin position="159"/>
        <end position="161"/>
    </location>
</feature>
<feature type="active site" description="Nucleophile" evidence="1">
    <location>
        <position position="113"/>
    </location>
</feature>
<feature type="active site" description="Cysteine persulfide intermediate" evidence="1">
    <location>
        <position position="209"/>
    </location>
</feature>
<feature type="binding site" evidence="1">
    <location>
        <begin position="22"/>
        <end position="29"/>
    </location>
    <ligand>
        <name>ATP</name>
        <dbReference type="ChEBI" id="CHEBI:30616"/>
    </ligand>
</feature>
<feature type="binding site" evidence="1">
    <location>
        <position position="48"/>
    </location>
    <ligand>
        <name>ATP</name>
        <dbReference type="ChEBI" id="CHEBI:30616"/>
    </ligand>
</feature>
<feature type="binding site" evidence="1">
    <location>
        <position position="137"/>
    </location>
    <ligand>
        <name>ATP</name>
        <dbReference type="ChEBI" id="CHEBI:30616"/>
    </ligand>
</feature>
<feature type="site" description="Interaction with tRNA" evidence="1">
    <location>
        <position position="138"/>
    </location>
</feature>
<feature type="site" description="Interaction with tRNA" evidence="1">
    <location>
        <position position="354"/>
    </location>
</feature>
<feature type="disulfide bond" description="Alternate" evidence="1">
    <location>
        <begin position="113"/>
        <end position="209"/>
    </location>
</feature>
<comment type="function">
    <text evidence="1">Catalyzes the 2-thiolation of uridine at the wobble position (U34) of tRNA, leading to the formation of s(2)U34.</text>
</comment>
<comment type="catalytic activity">
    <reaction evidence="1">
        <text>S-sulfanyl-L-cysteinyl-[protein] + uridine(34) in tRNA + AH2 + ATP = 2-thiouridine(34) in tRNA + L-cysteinyl-[protein] + A + AMP + diphosphate + H(+)</text>
        <dbReference type="Rhea" id="RHEA:47032"/>
        <dbReference type="Rhea" id="RHEA-COMP:10131"/>
        <dbReference type="Rhea" id="RHEA-COMP:11726"/>
        <dbReference type="Rhea" id="RHEA-COMP:11727"/>
        <dbReference type="Rhea" id="RHEA-COMP:11728"/>
        <dbReference type="ChEBI" id="CHEBI:13193"/>
        <dbReference type="ChEBI" id="CHEBI:15378"/>
        <dbReference type="ChEBI" id="CHEBI:17499"/>
        <dbReference type="ChEBI" id="CHEBI:29950"/>
        <dbReference type="ChEBI" id="CHEBI:30616"/>
        <dbReference type="ChEBI" id="CHEBI:33019"/>
        <dbReference type="ChEBI" id="CHEBI:61963"/>
        <dbReference type="ChEBI" id="CHEBI:65315"/>
        <dbReference type="ChEBI" id="CHEBI:87170"/>
        <dbReference type="ChEBI" id="CHEBI:456215"/>
        <dbReference type="EC" id="2.8.1.13"/>
    </reaction>
</comment>
<comment type="subcellular location">
    <subcellularLocation>
        <location evidence="1">Cytoplasm</location>
    </subcellularLocation>
</comment>
<comment type="similarity">
    <text evidence="1">Belongs to the MnmA/TRMU family.</text>
</comment>
<dbReference type="EC" id="2.8.1.13" evidence="1"/>
<dbReference type="EMBL" id="CP001019">
    <property type="protein sequence ID" value="ACJ18243.1"/>
    <property type="molecule type" value="Genomic_DNA"/>
</dbReference>
<dbReference type="SMR" id="B6IZW5"/>
<dbReference type="KEGG" id="cbg:CbuG_0861"/>
<dbReference type="HOGENOM" id="CLU_035188_1_0_6"/>
<dbReference type="GO" id="GO:0005737">
    <property type="term" value="C:cytoplasm"/>
    <property type="evidence" value="ECO:0007669"/>
    <property type="project" value="UniProtKB-SubCell"/>
</dbReference>
<dbReference type="GO" id="GO:0005524">
    <property type="term" value="F:ATP binding"/>
    <property type="evidence" value="ECO:0007669"/>
    <property type="project" value="UniProtKB-KW"/>
</dbReference>
<dbReference type="GO" id="GO:0000049">
    <property type="term" value="F:tRNA binding"/>
    <property type="evidence" value="ECO:0007669"/>
    <property type="project" value="UniProtKB-KW"/>
</dbReference>
<dbReference type="GO" id="GO:0103016">
    <property type="term" value="F:tRNA-uridine 2-sulfurtransferase activity"/>
    <property type="evidence" value="ECO:0007669"/>
    <property type="project" value="UniProtKB-EC"/>
</dbReference>
<dbReference type="GO" id="GO:0002143">
    <property type="term" value="P:tRNA wobble position uridine thiolation"/>
    <property type="evidence" value="ECO:0007669"/>
    <property type="project" value="TreeGrafter"/>
</dbReference>
<dbReference type="CDD" id="cd01998">
    <property type="entry name" value="MnmA_TRMU-like"/>
    <property type="match status" value="1"/>
</dbReference>
<dbReference type="FunFam" id="2.30.30.280:FF:000001">
    <property type="entry name" value="tRNA-specific 2-thiouridylase MnmA"/>
    <property type="match status" value="1"/>
</dbReference>
<dbReference type="FunFam" id="2.40.30.10:FF:000023">
    <property type="entry name" value="tRNA-specific 2-thiouridylase MnmA"/>
    <property type="match status" value="1"/>
</dbReference>
<dbReference type="FunFam" id="3.40.50.620:FF:000004">
    <property type="entry name" value="tRNA-specific 2-thiouridylase MnmA"/>
    <property type="match status" value="1"/>
</dbReference>
<dbReference type="Gene3D" id="2.30.30.280">
    <property type="entry name" value="Adenine nucleotide alpha hydrolases-like domains"/>
    <property type="match status" value="1"/>
</dbReference>
<dbReference type="Gene3D" id="3.40.50.620">
    <property type="entry name" value="HUPs"/>
    <property type="match status" value="1"/>
</dbReference>
<dbReference type="Gene3D" id="2.40.30.10">
    <property type="entry name" value="Translation factors"/>
    <property type="match status" value="1"/>
</dbReference>
<dbReference type="HAMAP" id="MF_00144">
    <property type="entry name" value="tRNA_thiouridyl_MnmA"/>
    <property type="match status" value="1"/>
</dbReference>
<dbReference type="InterPro" id="IPR004506">
    <property type="entry name" value="MnmA-like"/>
</dbReference>
<dbReference type="InterPro" id="IPR046885">
    <property type="entry name" value="MnmA-like_C"/>
</dbReference>
<dbReference type="InterPro" id="IPR046884">
    <property type="entry name" value="MnmA-like_central"/>
</dbReference>
<dbReference type="InterPro" id="IPR023382">
    <property type="entry name" value="MnmA-like_central_sf"/>
</dbReference>
<dbReference type="InterPro" id="IPR014729">
    <property type="entry name" value="Rossmann-like_a/b/a_fold"/>
</dbReference>
<dbReference type="NCBIfam" id="NF001138">
    <property type="entry name" value="PRK00143.1"/>
    <property type="match status" value="1"/>
</dbReference>
<dbReference type="NCBIfam" id="TIGR00420">
    <property type="entry name" value="trmU"/>
    <property type="match status" value="1"/>
</dbReference>
<dbReference type="PANTHER" id="PTHR11933:SF5">
    <property type="entry name" value="MITOCHONDRIAL TRNA-SPECIFIC 2-THIOURIDYLASE 1"/>
    <property type="match status" value="1"/>
</dbReference>
<dbReference type="PANTHER" id="PTHR11933">
    <property type="entry name" value="TRNA 5-METHYLAMINOMETHYL-2-THIOURIDYLATE -METHYLTRANSFERASE"/>
    <property type="match status" value="1"/>
</dbReference>
<dbReference type="Pfam" id="PF03054">
    <property type="entry name" value="tRNA_Me_trans"/>
    <property type="match status" value="1"/>
</dbReference>
<dbReference type="Pfam" id="PF20258">
    <property type="entry name" value="tRNA_Me_trans_C"/>
    <property type="match status" value="1"/>
</dbReference>
<dbReference type="Pfam" id="PF20259">
    <property type="entry name" value="tRNA_Me_trans_M"/>
    <property type="match status" value="1"/>
</dbReference>
<dbReference type="SUPFAM" id="SSF52402">
    <property type="entry name" value="Adenine nucleotide alpha hydrolases-like"/>
    <property type="match status" value="1"/>
</dbReference>
<sequence length="371" mass="41916">MGIIFYTTQMPNFEQNQVIAVGLSGGVDSSVAALVLKEKGYEVIGLFMQNWETDSKDPFCTAEQDLSDAKAIADHIGIPLYVVNFSKAYWNHVFQHCLDEFAQGRTPNPDVWCNREIKFKSLLDHAKKLGATHLATGHYACIQNENNEYRLLKSNDSHKDQSYFLHLLNQYQLANSVFPIGGYQKSEVRAIAKKRGFINHAKKDSTGICFIGERKFKDFLNEFLLAQPGNIETSEGKIIGKHDGIMFYTVGQRKGLHIGGRPDAGEAPWYVVDKDVKRNVLIVVQGYEHPLLYSQELTCTNLHWIRDTEPSFPLTCKAKTRCRQADQTCVVTRLDNDHCHVQFEHPQRAITRGQSVVFYLGNECLGGGIIN</sequence>
<organism>
    <name type="scientific">Coxiella burnetii (strain CbuG_Q212)</name>
    <name type="common">Coxiella burnetii (strain Q212)</name>
    <dbReference type="NCBI Taxonomy" id="434923"/>
    <lineage>
        <taxon>Bacteria</taxon>
        <taxon>Pseudomonadati</taxon>
        <taxon>Pseudomonadota</taxon>
        <taxon>Gammaproteobacteria</taxon>
        <taxon>Legionellales</taxon>
        <taxon>Coxiellaceae</taxon>
        <taxon>Coxiella</taxon>
    </lineage>
</organism>
<evidence type="ECO:0000255" key="1">
    <source>
        <dbReference type="HAMAP-Rule" id="MF_00144"/>
    </source>
</evidence>
<gene>
    <name evidence="1" type="primary">mnmA</name>
    <name type="ordered locus">CbuG_0861</name>
</gene>